<proteinExistence type="inferred from homology"/>
<comment type="function">
    <text evidence="2">Involved in de novo bacterial ceramide synthesis.</text>
</comment>
<comment type="pathway">
    <text evidence="4">Lipid metabolism; sphingolipid metabolism.</text>
</comment>
<comment type="subcellular location">
    <subcellularLocation>
        <location evidence="4">Cell inner membrane</location>
        <topology evidence="1">Multi-pass membrane protein</topology>
    </subcellularLocation>
</comment>
<comment type="disruption phenotype">
    <text evidence="2">Deletion of the gene leads to a ceramide molecule with a mass reduction of 16 Da corresponding to the loss of a hydroxyl group.</text>
</comment>
<comment type="similarity">
    <text evidence="4">Belongs to the fatty acid desaturase type 1 family.</text>
</comment>
<dbReference type="EMBL" id="CP001340">
    <property type="protein sequence ID" value="ACL93669.1"/>
    <property type="molecule type" value="Genomic_DNA"/>
</dbReference>
<dbReference type="RefSeq" id="WP_012639906.1">
    <property type="nucleotide sequence ID" value="NC_011916.1"/>
</dbReference>
<dbReference type="RefSeq" id="YP_002515577.1">
    <property type="nucleotide sequence ID" value="NC_011916.1"/>
</dbReference>
<dbReference type="GeneID" id="7330248"/>
<dbReference type="KEGG" id="ccs:CCNA_00202"/>
<dbReference type="PATRIC" id="fig|565050.3.peg.200"/>
<dbReference type="HOGENOM" id="CLU_780549_0_0_5"/>
<dbReference type="OrthoDB" id="9792534at2"/>
<dbReference type="UniPathway" id="UPA00222"/>
<dbReference type="Proteomes" id="UP000001364">
    <property type="component" value="Chromosome"/>
</dbReference>
<dbReference type="GO" id="GO:0005886">
    <property type="term" value="C:plasma membrane"/>
    <property type="evidence" value="ECO:0007669"/>
    <property type="project" value="UniProtKB-SubCell"/>
</dbReference>
<dbReference type="GO" id="GO:0016717">
    <property type="term" value="F:oxidoreductase activity, acting on paired donors, with oxidation of a pair of donors resulting in the reduction of molecular oxygen to two molecules of water"/>
    <property type="evidence" value="ECO:0007669"/>
    <property type="project" value="TreeGrafter"/>
</dbReference>
<dbReference type="GO" id="GO:0008610">
    <property type="term" value="P:lipid biosynthetic process"/>
    <property type="evidence" value="ECO:0007669"/>
    <property type="project" value="UniProtKB-ARBA"/>
</dbReference>
<dbReference type="GO" id="GO:0006665">
    <property type="term" value="P:sphingolipid metabolic process"/>
    <property type="evidence" value="ECO:0007669"/>
    <property type="project" value="UniProtKB-UniPathway"/>
</dbReference>
<dbReference type="InterPro" id="IPR005804">
    <property type="entry name" value="FA_desaturase_dom"/>
</dbReference>
<dbReference type="InterPro" id="IPR012171">
    <property type="entry name" value="Fatty_acid_desaturase"/>
</dbReference>
<dbReference type="PANTHER" id="PTHR19353:SF19">
    <property type="entry name" value="DELTA(5) FATTY ACID DESATURASE C-RELATED"/>
    <property type="match status" value="1"/>
</dbReference>
<dbReference type="PANTHER" id="PTHR19353">
    <property type="entry name" value="FATTY ACID DESATURASE 2"/>
    <property type="match status" value="1"/>
</dbReference>
<dbReference type="Pfam" id="PF00487">
    <property type="entry name" value="FA_desaturase"/>
    <property type="match status" value="1"/>
</dbReference>
<evidence type="ECO:0000255" key="1"/>
<evidence type="ECO:0000269" key="2">
    <source>
    </source>
</evidence>
<evidence type="ECO:0000303" key="3">
    <source>
    </source>
</evidence>
<evidence type="ECO:0000305" key="4"/>
<evidence type="ECO:0000312" key="5">
    <source>
        <dbReference type="EMBL" id="ACL93669.1"/>
    </source>
</evidence>
<gene>
    <name evidence="3" type="primary">cerH</name>
    <name evidence="5" type="ordered locus">CCNA_00202</name>
</gene>
<reference key="1">
    <citation type="journal article" date="2010" name="J. Bacteriol.">
        <title>The genetic basis of laboratory adaptation in Caulobacter crescentus.</title>
        <authorList>
            <person name="Marks M.E."/>
            <person name="Castro-Rojas C.M."/>
            <person name="Teiling C."/>
            <person name="Du L."/>
            <person name="Kapatral V."/>
            <person name="Walunas T.L."/>
            <person name="Crosson S."/>
        </authorList>
    </citation>
    <scope>NUCLEOTIDE SEQUENCE [LARGE SCALE GENOMIC DNA]</scope>
    <source>
        <strain>NA1000 / CB15N</strain>
    </source>
</reference>
<reference key="2">
    <citation type="journal article" date="2022" name="Nat. Chem. Biol.">
        <title>Convergent evolution of bacterial ceramide synthesis.</title>
        <authorList>
            <person name="Stankeviciute G."/>
            <person name="Tang P."/>
            <person name="Ashley B."/>
            <person name="Chamberlain J.D."/>
            <person name="Hansen M.E.B."/>
            <person name="Coleman A."/>
            <person name="D'Emilia R."/>
            <person name="Fu L."/>
            <person name="Mohan E.C."/>
            <person name="Nguyen H."/>
            <person name="Guan Z."/>
            <person name="Campopiano D.J."/>
            <person name="Klein E.A."/>
        </authorList>
    </citation>
    <scope>FUNCTION</scope>
    <scope>DISRUPTION PHENOTYPE</scope>
    <source>
        <strain>NA1000 / CB15N</strain>
    </source>
</reference>
<keyword id="KW-0997">Cell inner membrane</keyword>
<keyword id="KW-1003">Cell membrane</keyword>
<keyword id="KW-0443">Lipid metabolism</keyword>
<keyword id="KW-0472">Membrane</keyword>
<keyword id="KW-1185">Reference proteome</keyword>
<keyword id="KW-0812">Transmembrane</keyword>
<keyword id="KW-1133">Transmembrane helix</keyword>
<accession>A0A0H3C677</accession>
<name>CERH_CAUVN</name>
<feature type="chain" id="PRO_0000455457" description="Ceramide hydroxylase">
    <location>
        <begin position="1"/>
        <end position="351"/>
    </location>
</feature>
<feature type="transmembrane region" description="Helical" evidence="1">
    <location>
        <begin position="26"/>
        <end position="46"/>
    </location>
</feature>
<feature type="transmembrane region" description="Helical" evidence="1">
    <location>
        <begin position="47"/>
        <end position="67"/>
    </location>
</feature>
<feature type="transmembrane region" description="Helical" evidence="1">
    <location>
        <begin position="141"/>
        <end position="161"/>
    </location>
</feature>
<feature type="transmembrane region" description="Helical" evidence="1">
    <location>
        <begin position="204"/>
        <end position="224"/>
    </location>
</feature>
<protein>
    <recommendedName>
        <fullName evidence="3">Ceramide hydroxylase</fullName>
    </recommendedName>
</protein>
<organism>
    <name type="scientific">Caulobacter vibrioides (strain NA1000 / CB15N)</name>
    <name type="common">Caulobacter crescentus</name>
    <dbReference type="NCBI Taxonomy" id="565050"/>
    <lineage>
        <taxon>Bacteria</taxon>
        <taxon>Pseudomonadati</taxon>
        <taxon>Pseudomonadota</taxon>
        <taxon>Alphaproteobacteria</taxon>
        <taxon>Caulobacterales</taxon>
        <taxon>Caulobacteraceae</taxon>
        <taxon>Caulobacter</taxon>
    </lineage>
</organism>
<sequence length="351" mass="38920">MAKTASDISLTRQAMSLTEDLMTPNAAIYWADLTISAAVMWGGFLIAATTSSLALGLGAALLSMLALYRGLSFIHELTHIRDDEAPGFRVGWNVLVGVPLMTPSLMYEGVHNIHHIKDRFGTRLDPEYLPLSRFTPLKLAGFLFIALLAPLGVILRSAILIPLSFLVPSLRRYLKTKLSALIINPDFVREDLGRWRKAWVIQDVACWLWSWAVIAGLGLGVVPVRVVLTGLAIFSLATFLNQARTLVAHHWDNDGDKMTLEEQFLDSVNVPPPNLASALWAPVGLRYHALHHLLPRLPYHNMAKAHARLVEALGADSLYHRASEPGLFEALGDLFRRVRQKNAEARNQPAH</sequence>